<organism>
    <name type="scientific">Escherichia coli O157:H7</name>
    <dbReference type="NCBI Taxonomy" id="83334"/>
    <lineage>
        <taxon>Bacteria</taxon>
        <taxon>Pseudomonadati</taxon>
        <taxon>Pseudomonadota</taxon>
        <taxon>Gammaproteobacteria</taxon>
        <taxon>Enterobacterales</taxon>
        <taxon>Enterobacteriaceae</taxon>
        <taxon>Escherichia</taxon>
    </lineage>
</organism>
<dbReference type="EMBL" id="AE005174">
    <property type="protein sequence ID" value="AAG56236.1"/>
    <property type="molecule type" value="Genomic_DNA"/>
</dbReference>
<dbReference type="EMBL" id="BA000007">
    <property type="protein sequence ID" value="BAB35558.1"/>
    <property type="molecule type" value="Genomic_DNA"/>
</dbReference>
<dbReference type="PIR" id="G90895">
    <property type="entry name" value="G90895"/>
</dbReference>
<dbReference type="PIR" id="H85721">
    <property type="entry name" value="H85721"/>
</dbReference>
<dbReference type="SMR" id="P58529"/>
<dbReference type="STRING" id="155864.Z2173"/>
<dbReference type="KEGG" id="ece:Z2173"/>
<dbReference type="KEGG" id="ecs:ECs_2135"/>
<dbReference type="PATRIC" id="fig|386585.9.peg.2242"/>
<dbReference type="eggNOG" id="COG2814">
    <property type="taxonomic scope" value="Bacteria"/>
</dbReference>
<dbReference type="HOGENOM" id="CLU_001265_61_1_6"/>
<dbReference type="OMA" id="YTYLSPY"/>
<dbReference type="Proteomes" id="UP000000558">
    <property type="component" value="Chromosome"/>
</dbReference>
<dbReference type="Proteomes" id="UP000002519">
    <property type="component" value="Chromosome"/>
</dbReference>
<dbReference type="GO" id="GO:0005886">
    <property type="term" value="C:plasma membrane"/>
    <property type="evidence" value="ECO:0007669"/>
    <property type="project" value="UniProtKB-SubCell"/>
</dbReference>
<dbReference type="GO" id="GO:0015144">
    <property type="term" value="F:carbohydrate transmembrane transporter activity"/>
    <property type="evidence" value="ECO:0007669"/>
    <property type="project" value="UniProtKB-UniRule"/>
</dbReference>
<dbReference type="CDD" id="cd17324">
    <property type="entry name" value="MFS_NepI_like"/>
    <property type="match status" value="1"/>
</dbReference>
<dbReference type="FunFam" id="1.20.1250.20:FF:000079">
    <property type="entry name" value="Probable sugar efflux transporter"/>
    <property type="match status" value="1"/>
</dbReference>
<dbReference type="Gene3D" id="1.20.1250.20">
    <property type="entry name" value="MFS general substrate transporter like domains"/>
    <property type="match status" value="1"/>
</dbReference>
<dbReference type="HAMAP" id="MF_00517">
    <property type="entry name" value="MFS_SotB"/>
    <property type="match status" value="1"/>
</dbReference>
<dbReference type="InterPro" id="IPR011701">
    <property type="entry name" value="MFS"/>
</dbReference>
<dbReference type="InterPro" id="IPR020846">
    <property type="entry name" value="MFS_dom"/>
</dbReference>
<dbReference type="InterPro" id="IPR050189">
    <property type="entry name" value="MFS_Efflux_Transporters"/>
</dbReference>
<dbReference type="InterPro" id="IPR036259">
    <property type="entry name" value="MFS_trans_sf"/>
</dbReference>
<dbReference type="InterPro" id="IPR023495">
    <property type="entry name" value="Sugar_effux_transptr_put"/>
</dbReference>
<dbReference type="NCBIfam" id="NF002921">
    <property type="entry name" value="PRK03545.1"/>
    <property type="match status" value="1"/>
</dbReference>
<dbReference type="PANTHER" id="PTHR43124">
    <property type="entry name" value="PURINE EFFLUX PUMP PBUE"/>
    <property type="match status" value="1"/>
</dbReference>
<dbReference type="PANTHER" id="PTHR43124:SF4">
    <property type="entry name" value="SUGAR EFFLUX TRANSPORTER"/>
    <property type="match status" value="1"/>
</dbReference>
<dbReference type="Pfam" id="PF07690">
    <property type="entry name" value="MFS_1"/>
    <property type="match status" value="1"/>
</dbReference>
<dbReference type="SUPFAM" id="SSF103473">
    <property type="entry name" value="MFS general substrate transporter"/>
    <property type="match status" value="1"/>
</dbReference>
<dbReference type="PROSITE" id="PS50850">
    <property type="entry name" value="MFS"/>
    <property type="match status" value="1"/>
</dbReference>
<accession>P58529</accession>
<comment type="function">
    <text evidence="2">Involved in the efflux of sugars. The physiological role may be the reduction of the intracellular concentration of toxic sugars or sugar metabolites.</text>
</comment>
<comment type="subcellular location">
    <subcellularLocation>
        <location evidence="2">Cell inner membrane</location>
        <topology evidence="2">Multi-pass membrane protein</topology>
    </subcellularLocation>
</comment>
<comment type="similarity">
    <text evidence="2">Belongs to the major facilitator superfamily. SotB (TC 2.A.1.2) family.</text>
</comment>
<feature type="chain" id="PRO_0000209325" description="Probable sugar efflux transporter">
    <location>
        <begin position="1"/>
        <end position="396"/>
    </location>
</feature>
<feature type="topological domain" description="Cytoplasmic" evidence="1">
    <location>
        <begin position="1"/>
        <end position="14"/>
    </location>
</feature>
<feature type="transmembrane region" description="Helical" evidence="2">
    <location>
        <begin position="15"/>
        <end position="35"/>
    </location>
</feature>
<feature type="topological domain" description="Periplasmic" evidence="1">
    <location>
        <begin position="36"/>
        <end position="49"/>
    </location>
</feature>
<feature type="transmembrane region" description="Helical" evidence="2">
    <location>
        <begin position="50"/>
        <end position="70"/>
    </location>
</feature>
<feature type="topological domain" description="Cytoplasmic" evidence="1">
    <location>
        <begin position="71"/>
        <end position="80"/>
    </location>
</feature>
<feature type="transmembrane region" description="Helical" evidence="2">
    <location>
        <begin position="81"/>
        <end position="101"/>
    </location>
</feature>
<feature type="topological domain" description="Periplasmic" evidence="1">
    <location>
        <position position="102"/>
    </location>
</feature>
<feature type="transmembrane region" description="Helical" evidence="2">
    <location>
        <begin position="103"/>
        <end position="123"/>
    </location>
</feature>
<feature type="topological domain" description="Cytoplasmic" evidence="1">
    <location>
        <begin position="124"/>
        <end position="135"/>
    </location>
</feature>
<feature type="transmembrane region" description="Helical" evidence="2">
    <location>
        <begin position="136"/>
        <end position="156"/>
    </location>
</feature>
<feature type="topological domain" description="Periplasmic" evidence="1">
    <location>
        <begin position="157"/>
        <end position="169"/>
    </location>
</feature>
<feature type="transmembrane region" description="Helical" evidence="2">
    <location>
        <begin position="170"/>
        <end position="190"/>
    </location>
</feature>
<feature type="topological domain" description="Cytoplasmic" evidence="1">
    <location>
        <begin position="191"/>
        <end position="208"/>
    </location>
</feature>
<feature type="transmembrane region" description="Helical" evidence="2">
    <location>
        <begin position="209"/>
        <end position="229"/>
    </location>
</feature>
<feature type="topological domain" description="Periplasmic" evidence="1">
    <location>
        <begin position="230"/>
        <end position="245"/>
    </location>
</feature>
<feature type="transmembrane region" description="Helical" evidence="2">
    <location>
        <begin position="246"/>
        <end position="266"/>
    </location>
</feature>
<feature type="topological domain" description="Cytoplasmic" evidence="1">
    <location>
        <begin position="267"/>
        <end position="274"/>
    </location>
</feature>
<feature type="transmembrane region" description="Helical" evidence="2">
    <location>
        <begin position="275"/>
        <end position="295"/>
    </location>
</feature>
<feature type="topological domain" description="Periplasmic" evidence="1">
    <location>
        <begin position="296"/>
        <end position="298"/>
    </location>
</feature>
<feature type="transmembrane region" description="Helical" evidence="2">
    <location>
        <begin position="299"/>
        <end position="319"/>
    </location>
</feature>
<feature type="topological domain" description="Cytoplasmic" evidence="1">
    <location>
        <begin position="320"/>
        <end position="332"/>
    </location>
</feature>
<feature type="transmembrane region" description="Helical" evidence="2">
    <location>
        <begin position="333"/>
        <end position="353"/>
    </location>
</feature>
<feature type="topological domain" description="Periplasmic" evidence="1">
    <location>
        <begin position="354"/>
        <end position="363"/>
    </location>
</feature>
<feature type="transmembrane region" description="Helical" evidence="2">
    <location>
        <begin position="364"/>
        <end position="384"/>
    </location>
</feature>
<feature type="topological domain" description="Cytoplasmic" evidence="1">
    <location>
        <begin position="385"/>
        <end position="396"/>
    </location>
</feature>
<evidence type="ECO:0000255" key="1"/>
<evidence type="ECO:0000255" key="2">
    <source>
        <dbReference type="HAMAP-Rule" id="MF_00517"/>
    </source>
</evidence>
<name>SOTB_ECO57</name>
<protein>
    <recommendedName>
        <fullName evidence="2">Probable sugar efflux transporter</fullName>
    </recommendedName>
</protein>
<keyword id="KW-0997">Cell inner membrane</keyword>
<keyword id="KW-1003">Cell membrane</keyword>
<keyword id="KW-0472">Membrane</keyword>
<keyword id="KW-1185">Reference proteome</keyword>
<keyword id="KW-0762">Sugar transport</keyword>
<keyword id="KW-0812">Transmembrane</keyword>
<keyword id="KW-1133">Transmembrane helix</keyword>
<keyword id="KW-0813">Transport</keyword>
<proteinExistence type="inferred from homology"/>
<sequence>MTTNTVSRKVAWLRVVTLAVAAFIFNTTEFVPVGLLSDIAQSFHMQTAQVGIMLTIYAWVVALMSLPFMLMTSQVERRKLLICLFVVFIASHVLSFLSWSFTVLVISRIGVAFAHAIFWSITASLAIRMAPAGKRAQALSLIATGTALAMVLGLPLGRIVGQYFGWRMTFFAIGIGALITLLCLIKLLPLLPSEHSGSLKSLPLLFRRPALMSIYLLTVVVVTAHYTAYSYIEPFVQNIAGFSANFATALLLLLGGAGIIGSVIFGKLGNQYASALVSTAIALLLVCLALLLPAANSEIHLGVLSIFWGIAMMIIGLGMQVKVLALAPDATDVAMALFSGIFNIGIGAGALVGNQVSLHWSMSMIGYVGTVPAFAALIWSIIIFRRWPVTLEEQTQ</sequence>
<reference key="1">
    <citation type="journal article" date="2001" name="Nature">
        <title>Genome sequence of enterohaemorrhagic Escherichia coli O157:H7.</title>
        <authorList>
            <person name="Perna N.T."/>
            <person name="Plunkett G. III"/>
            <person name="Burland V."/>
            <person name="Mau B."/>
            <person name="Glasner J.D."/>
            <person name="Rose D.J."/>
            <person name="Mayhew G.F."/>
            <person name="Evans P.S."/>
            <person name="Gregor J."/>
            <person name="Kirkpatrick H.A."/>
            <person name="Posfai G."/>
            <person name="Hackett J."/>
            <person name="Klink S."/>
            <person name="Boutin A."/>
            <person name="Shao Y."/>
            <person name="Miller L."/>
            <person name="Grotbeck E.J."/>
            <person name="Davis N.W."/>
            <person name="Lim A."/>
            <person name="Dimalanta E.T."/>
            <person name="Potamousis K."/>
            <person name="Apodaca J."/>
            <person name="Anantharaman T.S."/>
            <person name="Lin J."/>
            <person name="Yen G."/>
            <person name="Schwartz D.C."/>
            <person name="Welch R.A."/>
            <person name="Blattner F.R."/>
        </authorList>
    </citation>
    <scope>NUCLEOTIDE SEQUENCE [LARGE SCALE GENOMIC DNA]</scope>
    <source>
        <strain>O157:H7 / EDL933 / ATCC 700927 / EHEC</strain>
    </source>
</reference>
<reference key="2">
    <citation type="journal article" date="2001" name="DNA Res.">
        <title>Complete genome sequence of enterohemorrhagic Escherichia coli O157:H7 and genomic comparison with a laboratory strain K-12.</title>
        <authorList>
            <person name="Hayashi T."/>
            <person name="Makino K."/>
            <person name="Ohnishi M."/>
            <person name="Kurokawa K."/>
            <person name="Ishii K."/>
            <person name="Yokoyama K."/>
            <person name="Han C.-G."/>
            <person name="Ohtsubo E."/>
            <person name="Nakayama K."/>
            <person name="Murata T."/>
            <person name="Tanaka M."/>
            <person name="Tobe T."/>
            <person name="Iida T."/>
            <person name="Takami H."/>
            <person name="Honda T."/>
            <person name="Sasakawa C."/>
            <person name="Ogasawara N."/>
            <person name="Yasunaga T."/>
            <person name="Kuhara S."/>
            <person name="Shiba T."/>
            <person name="Hattori M."/>
            <person name="Shinagawa H."/>
        </authorList>
    </citation>
    <scope>NUCLEOTIDE SEQUENCE [LARGE SCALE GENOMIC DNA]</scope>
    <source>
        <strain>O157:H7 / Sakai / RIMD 0509952 / EHEC</strain>
    </source>
</reference>
<gene>
    <name evidence="2" type="primary">sotB</name>
    <name type="ordered locus">Z2173</name>
    <name type="ordered locus">ECs2135</name>
</gene>